<accession>Q7N364</accession>
<evidence type="ECO:0000255" key="1">
    <source>
        <dbReference type="HAMAP-Rule" id="MF_00152"/>
    </source>
</evidence>
<organism>
    <name type="scientific">Photorhabdus laumondii subsp. laumondii (strain DSM 15139 / CIP 105565 / TT01)</name>
    <name type="common">Photorhabdus luminescens subsp. laumondii</name>
    <dbReference type="NCBI Taxonomy" id="243265"/>
    <lineage>
        <taxon>Bacteria</taxon>
        <taxon>Pseudomonadati</taxon>
        <taxon>Pseudomonadota</taxon>
        <taxon>Gammaproteobacteria</taxon>
        <taxon>Enterobacterales</taxon>
        <taxon>Morganellaceae</taxon>
        <taxon>Photorhabdus</taxon>
    </lineage>
</organism>
<gene>
    <name evidence="1" type="primary">nfo</name>
    <name type="ordered locus">plu2857</name>
</gene>
<protein>
    <recommendedName>
        <fullName evidence="1">Probable endonuclease 4</fullName>
        <ecNumber evidence="1">3.1.21.2</ecNumber>
    </recommendedName>
    <alternativeName>
        <fullName evidence="1">Endodeoxyribonuclease IV</fullName>
    </alternativeName>
    <alternativeName>
        <fullName evidence="1">Endonuclease IV</fullName>
    </alternativeName>
</protein>
<keyword id="KW-0227">DNA damage</keyword>
<keyword id="KW-0234">DNA repair</keyword>
<keyword id="KW-0255">Endonuclease</keyword>
<keyword id="KW-0378">Hydrolase</keyword>
<keyword id="KW-0479">Metal-binding</keyword>
<keyword id="KW-0540">Nuclease</keyword>
<keyword id="KW-1185">Reference proteome</keyword>
<keyword id="KW-0862">Zinc</keyword>
<dbReference type="EC" id="3.1.21.2" evidence="1"/>
<dbReference type="EMBL" id="BX571868">
    <property type="protein sequence ID" value="CAE15231.1"/>
    <property type="molecule type" value="Genomic_DNA"/>
</dbReference>
<dbReference type="RefSeq" id="WP_011147077.1">
    <property type="nucleotide sequence ID" value="NC_005126.1"/>
</dbReference>
<dbReference type="SMR" id="Q7N364"/>
<dbReference type="STRING" id="243265.plu2857"/>
<dbReference type="GeneID" id="48849119"/>
<dbReference type="KEGG" id="plu:plu2857"/>
<dbReference type="eggNOG" id="COG0648">
    <property type="taxonomic scope" value="Bacteria"/>
</dbReference>
<dbReference type="HOGENOM" id="CLU_025885_0_4_6"/>
<dbReference type="OrthoDB" id="9805666at2"/>
<dbReference type="Proteomes" id="UP000002514">
    <property type="component" value="Chromosome"/>
</dbReference>
<dbReference type="GO" id="GO:0008833">
    <property type="term" value="F:deoxyribonuclease IV (phage-T4-induced) activity"/>
    <property type="evidence" value="ECO:0007669"/>
    <property type="project" value="UniProtKB-UniRule"/>
</dbReference>
<dbReference type="GO" id="GO:0003677">
    <property type="term" value="F:DNA binding"/>
    <property type="evidence" value="ECO:0007669"/>
    <property type="project" value="InterPro"/>
</dbReference>
<dbReference type="GO" id="GO:0003906">
    <property type="term" value="F:DNA-(apurinic or apyrimidinic site) endonuclease activity"/>
    <property type="evidence" value="ECO:0007669"/>
    <property type="project" value="TreeGrafter"/>
</dbReference>
<dbReference type="GO" id="GO:0008081">
    <property type="term" value="F:phosphoric diester hydrolase activity"/>
    <property type="evidence" value="ECO:0007669"/>
    <property type="project" value="TreeGrafter"/>
</dbReference>
<dbReference type="GO" id="GO:0008270">
    <property type="term" value="F:zinc ion binding"/>
    <property type="evidence" value="ECO:0007669"/>
    <property type="project" value="UniProtKB-UniRule"/>
</dbReference>
<dbReference type="GO" id="GO:0006284">
    <property type="term" value="P:base-excision repair"/>
    <property type="evidence" value="ECO:0007669"/>
    <property type="project" value="TreeGrafter"/>
</dbReference>
<dbReference type="CDD" id="cd00019">
    <property type="entry name" value="AP2Ec"/>
    <property type="match status" value="1"/>
</dbReference>
<dbReference type="FunFam" id="3.20.20.150:FF:000001">
    <property type="entry name" value="Probable endonuclease 4"/>
    <property type="match status" value="1"/>
</dbReference>
<dbReference type="Gene3D" id="3.20.20.150">
    <property type="entry name" value="Divalent-metal-dependent TIM barrel enzymes"/>
    <property type="match status" value="1"/>
</dbReference>
<dbReference type="HAMAP" id="MF_00152">
    <property type="entry name" value="Nfo"/>
    <property type="match status" value="1"/>
</dbReference>
<dbReference type="InterPro" id="IPR001719">
    <property type="entry name" value="AP_endonuc_2"/>
</dbReference>
<dbReference type="InterPro" id="IPR018246">
    <property type="entry name" value="AP_endonuc_F2_Zn_BS"/>
</dbReference>
<dbReference type="InterPro" id="IPR036237">
    <property type="entry name" value="Xyl_isomerase-like_sf"/>
</dbReference>
<dbReference type="InterPro" id="IPR013022">
    <property type="entry name" value="Xyl_isomerase-like_TIM-brl"/>
</dbReference>
<dbReference type="NCBIfam" id="TIGR00587">
    <property type="entry name" value="nfo"/>
    <property type="match status" value="1"/>
</dbReference>
<dbReference type="NCBIfam" id="NF002199">
    <property type="entry name" value="PRK01060.1-4"/>
    <property type="match status" value="1"/>
</dbReference>
<dbReference type="PANTHER" id="PTHR21445:SF0">
    <property type="entry name" value="APURINIC-APYRIMIDINIC ENDONUCLEASE"/>
    <property type="match status" value="1"/>
</dbReference>
<dbReference type="PANTHER" id="PTHR21445">
    <property type="entry name" value="ENDONUCLEASE IV ENDODEOXYRIBONUCLEASE IV"/>
    <property type="match status" value="1"/>
</dbReference>
<dbReference type="Pfam" id="PF01261">
    <property type="entry name" value="AP_endonuc_2"/>
    <property type="match status" value="1"/>
</dbReference>
<dbReference type="SMART" id="SM00518">
    <property type="entry name" value="AP2Ec"/>
    <property type="match status" value="1"/>
</dbReference>
<dbReference type="SUPFAM" id="SSF51658">
    <property type="entry name" value="Xylose isomerase-like"/>
    <property type="match status" value="1"/>
</dbReference>
<dbReference type="PROSITE" id="PS00729">
    <property type="entry name" value="AP_NUCLEASE_F2_1"/>
    <property type="match status" value="1"/>
</dbReference>
<dbReference type="PROSITE" id="PS00730">
    <property type="entry name" value="AP_NUCLEASE_F2_2"/>
    <property type="match status" value="1"/>
</dbReference>
<dbReference type="PROSITE" id="PS00731">
    <property type="entry name" value="AP_NUCLEASE_F2_3"/>
    <property type="match status" value="1"/>
</dbReference>
<dbReference type="PROSITE" id="PS51432">
    <property type="entry name" value="AP_NUCLEASE_F2_4"/>
    <property type="match status" value="1"/>
</dbReference>
<comment type="function">
    <text evidence="1">Endonuclease IV plays a role in DNA repair. It cleaves phosphodiester bonds at apurinic or apyrimidinic (AP) sites, generating a 3'-hydroxyl group and a 5'-terminal sugar phosphate.</text>
</comment>
<comment type="catalytic activity">
    <reaction evidence="1">
        <text>Endonucleolytic cleavage to 5'-phosphooligonucleotide end-products.</text>
        <dbReference type="EC" id="3.1.21.2"/>
    </reaction>
</comment>
<comment type="cofactor">
    <cofactor evidence="1">
        <name>Zn(2+)</name>
        <dbReference type="ChEBI" id="CHEBI:29105"/>
    </cofactor>
    <text evidence="1">Binds 3 Zn(2+) ions.</text>
</comment>
<comment type="similarity">
    <text evidence="1">Belongs to the AP endonuclease 2 family.</text>
</comment>
<proteinExistence type="inferred from homology"/>
<reference key="1">
    <citation type="journal article" date="2003" name="Nat. Biotechnol.">
        <title>The genome sequence of the entomopathogenic bacterium Photorhabdus luminescens.</title>
        <authorList>
            <person name="Duchaud E."/>
            <person name="Rusniok C."/>
            <person name="Frangeul L."/>
            <person name="Buchrieser C."/>
            <person name="Givaudan A."/>
            <person name="Taourit S."/>
            <person name="Bocs S."/>
            <person name="Boursaux-Eude C."/>
            <person name="Chandler M."/>
            <person name="Charles J.-F."/>
            <person name="Dassa E."/>
            <person name="Derose R."/>
            <person name="Derzelle S."/>
            <person name="Freyssinet G."/>
            <person name="Gaudriault S."/>
            <person name="Medigue C."/>
            <person name="Lanois A."/>
            <person name="Powell K."/>
            <person name="Siguier P."/>
            <person name="Vincent R."/>
            <person name="Wingate V."/>
            <person name="Zouine M."/>
            <person name="Glaser P."/>
            <person name="Boemare N."/>
            <person name="Danchin A."/>
            <person name="Kunst F."/>
        </authorList>
    </citation>
    <scope>NUCLEOTIDE SEQUENCE [LARGE SCALE GENOMIC DNA]</scope>
    <source>
        <strain>DSM 15139 / CIP 105565 / TT01</strain>
    </source>
</reference>
<name>END4_PHOLL</name>
<feature type="chain" id="PRO_0000190864" description="Probable endonuclease 4">
    <location>
        <begin position="1"/>
        <end position="280"/>
    </location>
</feature>
<feature type="binding site" evidence="1">
    <location>
        <position position="69"/>
    </location>
    <ligand>
        <name>Zn(2+)</name>
        <dbReference type="ChEBI" id="CHEBI:29105"/>
        <label>1</label>
    </ligand>
</feature>
<feature type="binding site" evidence="1">
    <location>
        <position position="109"/>
    </location>
    <ligand>
        <name>Zn(2+)</name>
        <dbReference type="ChEBI" id="CHEBI:29105"/>
        <label>1</label>
    </ligand>
</feature>
<feature type="binding site" evidence="1">
    <location>
        <position position="145"/>
    </location>
    <ligand>
        <name>Zn(2+)</name>
        <dbReference type="ChEBI" id="CHEBI:29105"/>
        <label>1</label>
    </ligand>
</feature>
<feature type="binding site" evidence="1">
    <location>
        <position position="145"/>
    </location>
    <ligand>
        <name>Zn(2+)</name>
        <dbReference type="ChEBI" id="CHEBI:29105"/>
        <label>2</label>
    </ligand>
</feature>
<feature type="binding site" evidence="1">
    <location>
        <position position="179"/>
    </location>
    <ligand>
        <name>Zn(2+)</name>
        <dbReference type="ChEBI" id="CHEBI:29105"/>
        <label>2</label>
    </ligand>
</feature>
<feature type="binding site" evidence="1">
    <location>
        <position position="182"/>
    </location>
    <ligand>
        <name>Zn(2+)</name>
        <dbReference type="ChEBI" id="CHEBI:29105"/>
        <label>3</label>
    </ligand>
</feature>
<feature type="binding site" evidence="1">
    <location>
        <position position="216"/>
    </location>
    <ligand>
        <name>Zn(2+)</name>
        <dbReference type="ChEBI" id="CHEBI:29105"/>
        <label>2</label>
    </ligand>
</feature>
<feature type="binding site" evidence="1">
    <location>
        <position position="229"/>
    </location>
    <ligand>
        <name>Zn(2+)</name>
        <dbReference type="ChEBI" id="CHEBI:29105"/>
        <label>3</label>
    </ligand>
</feature>
<feature type="binding site" evidence="1">
    <location>
        <position position="231"/>
    </location>
    <ligand>
        <name>Zn(2+)</name>
        <dbReference type="ChEBI" id="CHEBI:29105"/>
        <label>3</label>
    </ligand>
</feature>
<feature type="binding site" evidence="1">
    <location>
        <position position="261"/>
    </location>
    <ligand>
        <name>Zn(2+)</name>
        <dbReference type="ChEBI" id="CHEBI:29105"/>
        <label>2</label>
    </ligand>
</feature>
<sequence length="280" mass="31390">MKFVGAHVSAAGGVDQAVIRAHELKATAFALFTKNQRQWHAPHLAADVIDKFKENCERYGYGSRQILPHDSYLINLGHPESEALEKSRLAFIDEMQRCEQLGIDLLNFHPGSHLNKVDVDKCLARIAESINIALNKTQRVTAVIENTAGQGTNLGFKFEHLAAIIDGVEDKNRVGVCIDTCHAFAAGYDLRTNDVCEQTFQQFEKIVGFQYLCGMHLNDAKSEFASRVDRHHSLGEGNIGKTPFSYIMKDARFDGIPLILETINPDIWPQEIAWLKLQQN</sequence>